<gene>
    <name type="primary">Babam1</name>
    <name type="synonym">Merit40</name>
    <name type="synonym">Nba1</name>
</gene>
<proteinExistence type="evidence at protein level"/>
<feature type="chain" id="PRO_0000288459" description="BRISC and BRCA1-A complex member 1">
    <location>
        <begin position="1"/>
        <end position="333"/>
    </location>
</feature>
<feature type="region of interest" description="Disordered" evidence="3">
    <location>
        <begin position="1"/>
        <end position="85"/>
    </location>
</feature>
<feature type="region of interest" description="VWFA-like">
    <location>
        <begin position="99"/>
        <end position="302"/>
    </location>
</feature>
<feature type="compositionally biased region" description="Acidic residues" evidence="3">
    <location>
        <begin position="10"/>
        <end position="24"/>
    </location>
</feature>
<feature type="compositionally biased region" description="Low complexity" evidence="3">
    <location>
        <begin position="58"/>
        <end position="67"/>
    </location>
</feature>
<feature type="modified residue" description="N-acetylmethionine" evidence="2">
    <location>
        <position position="1"/>
    </location>
</feature>
<feature type="modified residue" description="Phosphoserine" evidence="1">
    <location>
        <position position="8"/>
    </location>
</feature>
<feature type="modified residue" description="Phosphoserine" evidence="2">
    <location>
        <position position="33"/>
    </location>
</feature>
<feature type="modified residue" description="Phosphoserine" evidence="2">
    <location>
        <position position="53"/>
    </location>
</feature>
<feature type="sequence conflict" description="In Ref. 2; AAH05692." evidence="4" ref="2">
    <original>T</original>
    <variation>P</variation>
    <location>
        <position position="23"/>
    </location>
</feature>
<feature type="sequence conflict" description="In Ref. 2; AAH05692." evidence="4" ref="2">
    <original>S</original>
    <variation>N</variation>
    <location>
        <position position="48"/>
    </location>
</feature>
<feature type="sequence conflict" description="In Ref. 1; BAC36785." evidence="4" ref="1">
    <original>S</original>
    <variation>T</variation>
    <location>
        <position position="120"/>
    </location>
</feature>
<feature type="sequence conflict" description="In Ref. 2; AAH05692." evidence="4" ref="2">
    <original>A</original>
    <variation>S</variation>
    <location>
        <position position="315"/>
    </location>
</feature>
<comment type="function">
    <text evidence="2">Component of the BRCA1-A complex, a complex that specifically recognizes 'Lys-63'-linked ubiquitinated histones H2A and H2AX at DNA lesions sites, leading to target the BRCA1-BARD1 heterodimer to sites of DNA damage at double-strand breaks (DSBs). The BRCA1-A complex also possesses deubiquitinase activity that specifically removes 'Lys-63'-linked ubiquitin on histones H2A and H2AX. In the BRCA1-A complex, it is required for the complex integrity and its localization at DSBs. Component of the BRISC complex, a multiprotein complex that specifically cleaves 'Lys-63'-linked ubiquitin in various substrates. In these 2 complexes, it is probably required to maintain the stability of BABAM2 and help the 'Lys-63'-linked deubiquitinase activity mediated by BRCC3/BRCC36 component. The BRISC complex is required for normal mitotic spindle assembly and microtubule attachment to kinetochores via its role in deubiquitinating NUMA1. Plays a role in interferon signaling via its role in the deubiquitination of the interferon receptor IFNAR1; deubiquitination increases IFNAR1 activity by enhancing its stability and cell surface expression. Down-regulates the response to bacterial lipopolysaccharide (LPS) via its role in IFNAR1 deubiquitination.</text>
</comment>
<comment type="subunit">
    <text evidence="2">Component of the ARISC complex, at least composed of UIMC1/RAP80, ABRAXAS1, BRCC3/BRCC36, BABAM2 and BABAM1/NBA1. Component of the BRCA1-A complex, at least composed of BRCA1, BARD1, UIMC1/RAP80, ABRAXAS1, BRCC3/BRCC36, BABAM2 and BABAM1/NBA1. In the BRCA1-A complex, interacts directly with ABRAXAS1 and BABAM2. Component of the BRISC complex, at least composed of ABRAXAS2, BRCC3/BRCC36, BABAM2 and BABAM1/NBA1. Identified in a complex with SHMT2 and the other subunits of the BRISC complex.</text>
</comment>
<comment type="subcellular location">
    <subcellularLocation>
        <location evidence="2">Cytoplasm</location>
    </subcellularLocation>
    <subcellularLocation>
        <location evidence="2">Nucleus</location>
    </subcellularLocation>
    <text evidence="2">Localizes at sites of DNA damage at double-strand breaks (DSBs).</text>
</comment>
<comment type="domain">
    <text evidence="2">The VWFA-like region is similar to the VWFA domain. Its presence reveals similarities between the structure of the 19S proteasome and the BRCA1-A complexes.</text>
</comment>
<comment type="similarity">
    <text evidence="4">Belongs to the BABAM1 family.</text>
</comment>
<organism>
    <name type="scientific">Mus musculus</name>
    <name type="common">Mouse</name>
    <dbReference type="NCBI Taxonomy" id="10090"/>
    <lineage>
        <taxon>Eukaryota</taxon>
        <taxon>Metazoa</taxon>
        <taxon>Chordata</taxon>
        <taxon>Craniata</taxon>
        <taxon>Vertebrata</taxon>
        <taxon>Euteleostomi</taxon>
        <taxon>Mammalia</taxon>
        <taxon>Eutheria</taxon>
        <taxon>Euarchontoglires</taxon>
        <taxon>Glires</taxon>
        <taxon>Rodentia</taxon>
        <taxon>Myomorpha</taxon>
        <taxon>Muroidea</taxon>
        <taxon>Muridae</taxon>
        <taxon>Murinae</taxon>
        <taxon>Mus</taxon>
        <taxon>Mus</taxon>
    </lineage>
</organism>
<reference key="1">
    <citation type="journal article" date="2005" name="Science">
        <title>The transcriptional landscape of the mammalian genome.</title>
        <authorList>
            <person name="Carninci P."/>
            <person name="Kasukawa T."/>
            <person name="Katayama S."/>
            <person name="Gough J."/>
            <person name="Frith M.C."/>
            <person name="Maeda N."/>
            <person name="Oyama R."/>
            <person name="Ravasi T."/>
            <person name="Lenhard B."/>
            <person name="Wells C."/>
            <person name="Kodzius R."/>
            <person name="Shimokawa K."/>
            <person name="Bajic V.B."/>
            <person name="Brenner S.E."/>
            <person name="Batalov S."/>
            <person name="Forrest A.R."/>
            <person name="Zavolan M."/>
            <person name="Davis M.J."/>
            <person name="Wilming L.G."/>
            <person name="Aidinis V."/>
            <person name="Allen J.E."/>
            <person name="Ambesi-Impiombato A."/>
            <person name="Apweiler R."/>
            <person name="Aturaliya R.N."/>
            <person name="Bailey T.L."/>
            <person name="Bansal M."/>
            <person name="Baxter L."/>
            <person name="Beisel K.W."/>
            <person name="Bersano T."/>
            <person name="Bono H."/>
            <person name="Chalk A.M."/>
            <person name="Chiu K.P."/>
            <person name="Choudhary V."/>
            <person name="Christoffels A."/>
            <person name="Clutterbuck D.R."/>
            <person name="Crowe M.L."/>
            <person name="Dalla E."/>
            <person name="Dalrymple B.P."/>
            <person name="de Bono B."/>
            <person name="Della Gatta G."/>
            <person name="di Bernardo D."/>
            <person name="Down T."/>
            <person name="Engstrom P."/>
            <person name="Fagiolini M."/>
            <person name="Faulkner G."/>
            <person name="Fletcher C.F."/>
            <person name="Fukushima T."/>
            <person name="Furuno M."/>
            <person name="Futaki S."/>
            <person name="Gariboldi M."/>
            <person name="Georgii-Hemming P."/>
            <person name="Gingeras T.R."/>
            <person name="Gojobori T."/>
            <person name="Green R.E."/>
            <person name="Gustincich S."/>
            <person name="Harbers M."/>
            <person name="Hayashi Y."/>
            <person name="Hensch T.K."/>
            <person name="Hirokawa N."/>
            <person name="Hill D."/>
            <person name="Huminiecki L."/>
            <person name="Iacono M."/>
            <person name="Ikeo K."/>
            <person name="Iwama A."/>
            <person name="Ishikawa T."/>
            <person name="Jakt M."/>
            <person name="Kanapin A."/>
            <person name="Katoh M."/>
            <person name="Kawasawa Y."/>
            <person name="Kelso J."/>
            <person name="Kitamura H."/>
            <person name="Kitano H."/>
            <person name="Kollias G."/>
            <person name="Krishnan S.P."/>
            <person name="Kruger A."/>
            <person name="Kummerfeld S.K."/>
            <person name="Kurochkin I.V."/>
            <person name="Lareau L.F."/>
            <person name="Lazarevic D."/>
            <person name="Lipovich L."/>
            <person name="Liu J."/>
            <person name="Liuni S."/>
            <person name="McWilliam S."/>
            <person name="Madan Babu M."/>
            <person name="Madera M."/>
            <person name="Marchionni L."/>
            <person name="Matsuda H."/>
            <person name="Matsuzawa S."/>
            <person name="Miki H."/>
            <person name="Mignone F."/>
            <person name="Miyake S."/>
            <person name="Morris K."/>
            <person name="Mottagui-Tabar S."/>
            <person name="Mulder N."/>
            <person name="Nakano N."/>
            <person name="Nakauchi H."/>
            <person name="Ng P."/>
            <person name="Nilsson R."/>
            <person name="Nishiguchi S."/>
            <person name="Nishikawa S."/>
            <person name="Nori F."/>
            <person name="Ohara O."/>
            <person name="Okazaki Y."/>
            <person name="Orlando V."/>
            <person name="Pang K.C."/>
            <person name="Pavan W.J."/>
            <person name="Pavesi G."/>
            <person name="Pesole G."/>
            <person name="Petrovsky N."/>
            <person name="Piazza S."/>
            <person name="Reed J."/>
            <person name="Reid J.F."/>
            <person name="Ring B.Z."/>
            <person name="Ringwald M."/>
            <person name="Rost B."/>
            <person name="Ruan Y."/>
            <person name="Salzberg S.L."/>
            <person name="Sandelin A."/>
            <person name="Schneider C."/>
            <person name="Schoenbach C."/>
            <person name="Sekiguchi K."/>
            <person name="Semple C.A."/>
            <person name="Seno S."/>
            <person name="Sessa L."/>
            <person name="Sheng Y."/>
            <person name="Shibata Y."/>
            <person name="Shimada H."/>
            <person name="Shimada K."/>
            <person name="Silva D."/>
            <person name="Sinclair B."/>
            <person name="Sperling S."/>
            <person name="Stupka E."/>
            <person name="Sugiura K."/>
            <person name="Sultana R."/>
            <person name="Takenaka Y."/>
            <person name="Taki K."/>
            <person name="Tammoja K."/>
            <person name="Tan S.L."/>
            <person name="Tang S."/>
            <person name="Taylor M.S."/>
            <person name="Tegner J."/>
            <person name="Teichmann S.A."/>
            <person name="Ueda H.R."/>
            <person name="van Nimwegen E."/>
            <person name="Verardo R."/>
            <person name="Wei C.L."/>
            <person name="Yagi K."/>
            <person name="Yamanishi H."/>
            <person name="Zabarovsky E."/>
            <person name="Zhu S."/>
            <person name="Zimmer A."/>
            <person name="Hide W."/>
            <person name="Bult C."/>
            <person name="Grimmond S.M."/>
            <person name="Teasdale R.D."/>
            <person name="Liu E.T."/>
            <person name="Brusic V."/>
            <person name="Quackenbush J."/>
            <person name="Wahlestedt C."/>
            <person name="Mattick J.S."/>
            <person name="Hume D.A."/>
            <person name="Kai C."/>
            <person name="Sasaki D."/>
            <person name="Tomaru Y."/>
            <person name="Fukuda S."/>
            <person name="Kanamori-Katayama M."/>
            <person name="Suzuki M."/>
            <person name="Aoki J."/>
            <person name="Arakawa T."/>
            <person name="Iida J."/>
            <person name="Imamura K."/>
            <person name="Itoh M."/>
            <person name="Kato T."/>
            <person name="Kawaji H."/>
            <person name="Kawagashira N."/>
            <person name="Kawashima T."/>
            <person name="Kojima M."/>
            <person name="Kondo S."/>
            <person name="Konno H."/>
            <person name="Nakano K."/>
            <person name="Ninomiya N."/>
            <person name="Nishio T."/>
            <person name="Okada M."/>
            <person name="Plessy C."/>
            <person name="Shibata K."/>
            <person name="Shiraki T."/>
            <person name="Suzuki S."/>
            <person name="Tagami M."/>
            <person name="Waki K."/>
            <person name="Watahiki A."/>
            <person name="Okamura-Oho Y."/>
            <person name="Suzuki H."/>
            <person name="Kawai J."/>
            <person name="Hayashizaki Y."/>
        </authorList>
    </citation>
    <scope>NUCLEOTIDE SEQUENCE [LARGE SCALE MRNA]</scope>
    <source>
        <strain>C57BL/6J</strain>
        <tissue>Head</tissue>
        <tissue>Heart</tissue>
        <tissue>Olfactory bulb</tissue>
    </source>
</reference>
<reference key="2">
    <citation type="journal article" date="2004" name="Genome Res.">
        <title>The status, quality, and expansion of the NIH full-length cDNA project: the Mammalian Gene Collection (MGC).</title>
        <authorList>
            <consortium name="The MGC Project Team"/>
        </authorList>
    </citation>
    <scope>NUCLEOTIDE SEQUENCE [LARGE SCALE MRNA]</scope>
    <source>
        <strain>FVB/N</strain>
        <tissue>Mammary tumor</tissue>
    </source>
</reference>
<reference key="3">
    <citation type="journal article" date="2010" name="Cell">
        <title>A tissue-specific atlas of mouse protein phosphorylation and expression.</title>
        <authorList>
            <person name="Huttlin E.L."/>
            <person name="Jedrychowski M.P."/>
            <person name="Elias J.E."/>
            <person name="Goswami T."/>
            <person name="Rad R."/>
            <person name="Beausoleil S.A."/>
            <person name="Villen J."/>
            <person name="Haas W."/>
            <person name="Sowa M.E."/>
            <person name="Gygi S.P."/>
        </authorList>
    </citation>
    <scope>IDENTIFICATION BY MASS SPECTROMETRY [LARGE SCALE ANALYSIS]</scope>
    <source>
        <tissue>Brain</tissue>
        <tissue>Kidney</tissue>
        <tissue>Liver</tissue>
        <tissue>Lung</tissue>
        <tissue>Pancreas</tissue>
        <tissue>Spleen</tissue>
        <tissue>Testis</tissue>
    </source>
</reference>
<keyword id="KW-0002">3D-structure</keyword>
<keyword id="KW-0007">Acetylation</keyword>
<keyword id="KW-0131">Cell cycle</keyword>
<keyword id="KW-0132">Cell division</keyword>
<keyword id="KW-0156">Chromatin regulator</keyword>
<keyword id="KW-0963">Cytoplasm</keyword>
<keyword id="KW-0227">DNA damage</keyword>
<keyword id="KW-0234">DNA repair</keyword>
<keyword id="KW-0498">Mitosis</keyword>
<keyword id="KW-0539">Nucleus</keyword>
<keyword id="KW-0597">Phosphoprotein</keyword>
<keyword id="KW-1185">Reference proteome</keyword>
<keyword id="KW-0833">Ubl conjugation pathway</keyword>
<name>BABA1_MOUSE</name>
<evidence type="ECO:0000250" key="1">
    <source>
        <dbReference type="UniProtKB" id="Q5XIJ6"/>
    </source>
</evidence>
<evidence type="ECO:0000250" key="2">
    <source>
        <dbReference type="UniProtKB" id="Q9NWV8"/>
    </source>
</evidence>
<evidence type="ECO:0000256" key="3">
    <source>
        <dbReference type="SAM" id="MobiDB-lite"/>
    </source>
</evidence>
<evidence type="ECO:0000305" key="4"/>
<accession>Q3UI43</accession>
<accession>Q8C5Q8</accession>
<accession>Q99JU2</accession>
<accession>Q9CTJ4</accession>
<sequence length="333" mass="36793">MEVAEANSPTEEEEEEEEEGEETISEPRPHTRSNPEGAEDRALGAQASVGSRSEGEGEAATADGGAASVPGAGPKPWQVPASASEVQIRTPRVNCPEKVIICLDLSEEMSVPKLESFNGSRTNALNVSQKMVEMFVRTKHKIDKSHEFALVVVNDDSAWLSGLTSDPRELCSCLYDLETASCSTFNLEGLFSLIQQKTELPVTENVQTIPPPYVVRTILVYSRPPCQPQFSLTEPMKKMFQCPYFFFDIVYIHNGTEEKEEDMSWKDMFAFMGSLDTKGASYKYEVALAGPALELHNCMAKLLAHPLQRPCQTHASYSLLEEDEEAGEEEATV</sequence>
<dbReference type="EMBL" id="AK003366">
    <property type="protein sequence ID" value="BAB22740.1"/>
    <property type="molecule type" value="mRNA"/>
</dbReference>
<dbReference type="EMBL" id="AK077402">
    <property type="protein sequence ID" value="BAC36785.1"/>
    <property type="molecule type" value="mRNA"/>
</dbReference>
<dbReference type="EMBL" id="AK078265">
    <property type="protein sequence ID" value="BAC37197.1"/>
    <property type="molecule type" value="mRNA"/>
</dbReference>
<dbReference type="EMBL" id="AK147083">
    <property type="protein sequence ID" value="BAE27663.1"/>
    <property type="molecule type" value="mRNA"/>
</dbReference>
<dbReference type="EMBL" id="BC005692">
    <property type="protein sequence ID" value="AAH05692.1"/>
    <property type="molecule type" value="mRNA"/>
</dbReference>
<dbReference type="CCDS" id="CCDS40381.1"/>
<dbReference type="RefSeq" id="NP_080912.2">
    <property type="nucleotide sequence ID" value="NM_026636.2"/>
</dbReference>
<dbReference type="RefSeq" id="XP_017168436.1">
    <property type="nucleotide sequence ID" value="XM_017312947.2"/>
</dbReference>
<dbReference type="RefSeq" id="XP_017168437.1">
    <property type="nucleotide sequence ID" value="XM_017312948.3"/>
</dbReference>
<dbReference type="PDB" id="6GVW">
    <property type="method" value="X-ray"/>
    <property type="resolution" value="3.75 A"/>
    <property type="chains" value="D/I=1-333"/>
</dbReference>
<dbReference type="PDBsum" id="6GVW"/>
<dbReference type="SMR" id="Q3UI43"/>
<dbReference type="BioGRID" id="212762">
    <property type="interactions" value="16"/>
</dbReference>
<dbReference type="ComplexPortal" id="CPX-4702">
    <property type="entry name" value="BRCA1-A complex"/>
</dbReference>
<dbReference type="FunCoup" id="Q3UI43">
    <property type="interactions" value="4469"/>
</dbReference>
<dbReference type="STRING" id="10090.ENSMUSP00000002473"/>
<dbReference type="GlyGen" id="Q3UI43">
    <property type="glycosylation" value="2 sites, 1 N-linked glycan (1 site), 1 O-linked glycan (1 site)"/>
</dbReference>
<dbReference type="iPTMnet" id="Q3UI43"/>
<dbReference type="PhosphoSitePlus" id="Q3UI43"/>
<dbReference type="SwissPalm" id="Q3UI43"/>
<dbReference type="jPOST" id="Q3UI43"/>
<dbReference type="PaxDb" id="10090-ENSMUSP00000002473"/>
<dbReference type="PeptideAtlas" id="Q3UI43"/>
<dbReference type="ProteomicsDB" id="277171"/>
<dbReference type="Pumba" id="Q3UI43"/>
<dbReference type="Ensembl" id="ENSMUST00000002473.10">
    <property type="protein sequence ID" value="ENSMUSP00000002473.9"/>
    <property type="gene ID" value="ENSMUSG00000031820.10"/>
</dbReference>
<dbReference type="GeneID" id="68251"/>
<dbReference type="KEGG" id="mmu:68251"/>
<dbReference type="UCSC" id="uc009mdb.2">
    <property type="organism name" value="mouse"/>
</dbReference>
<dbReference type="AGR" id="MGI:1915501"/>
<dbReference type="CTD" id="29086"/>
<dbReference type="MGI" id="MGI:1915501">
    <property type="gene designation" value="Babam1"/>
</dbReference>
<dbReference type="VEuPathDB" id="HostDB:ENSMUSG00000031820"/>
<dbReference type="eggNOG" id="ENOG502QPZP">
    <property type="taxonomic scope" value="Eukaryota"/>
</dbReference>
<dbReference type="GeneTree" id="ENSGT00390000016934"/>
<dbReference type="HOGENOM" id="CLU_077295_0_0_1"/>
<dbReference type="InParanoid" id="Q3UI43"/>
<dbReference type="OMA" id="SCTTAWP"/>
<dbReference type="OrthoDB" id="547311at2759"/>
<dbReference type="PhylomeDB" id="Q3UI43"/>
<dbReference type="TreeFam" id="TF329070"/>
<dbReference type="Reactome" id="R-MMU-5689901">
    <property type="pathway name" value="Metalloprotease DUBs"/>
</dbReference>
<dbReference type="Reactome" id="R-MMU-5693565">
    <property type="pathway name" value="Recruitment and ATM-mediated phosphorylation of repair and signaling proteins at DNA double strand breaks"/>
</dbReference>
<dbReference type="Reactome" id="R-MMU-5693571">
    <property type="pathway name" value="Nonhomologous End-Joining (NHEJ)"/>
</dbReference>
<dbReference type="Reactome" id="R-MMU-5693607">
    <property type="pathway name" value="Processing of DNA double-strand break ends"/>
</dbReference>
<dbReference type="Reactome" id="R-MMU-69473">
    <property type="pathway name" value="G2/M DNA damage checkpoint"/>
</dbReference>
<dbReference type="BioGRID-ORCS" id="68251">
    <property type="hits" value="18 hits in 115 CRISPR screens"/>
</dbReference>
<dbReference type="ChiTaRS" id="Babam1">
    <property type="organism name" value="mouse"/>
</dbReference>
<dbReference type="PRO" id="PR:Q3UI43"/>
<dbReference type="Proteomes" id="UP000000589">
    <property type="component" value="Chromosome 8"/>
</dbReference>
<dbReference type="RNAct" id="Q3UI43">
    <property type="molecule type" value="protein"/>
</dbReference>
<dbReference type="Bgee" id="ENSMUSG00000031820">
    <property type="expression patterns" value="Expressed in retinal neural layer and 263 other cell types or tissues"/>
</dbReference>
<dbReference type="ExpressionAtlas" id="Q3UI43">
    <property type="expression patterns" value="baseline and differential"/>
</dbReference>
<dbReference type="GO" id="GO:0070531">
    <property type="term" value="C:BRCA1-A complex"/>
    <property type="evidence" value="ECO:0000250"/>
    <property type="project" value="UniProtKB"/>
</dbReference>
<dbReference type="GO" id="GO:0070552">
    <property type="term" value="C:BRISC complex"/>
    <property type="evidence" value="ECO:0000250"/>
    <property type="project" value="UniProtKB"/>
</dbReference>
<dbReference type="GO" id="GO:0005737">
    <property type="term" value="C:cytoplasm"/>
    <property type="evidence" value="ECO:0000250"/>
    <property type="project" value="UniProtKB"/>
</dbReference>
<dbReference type="GO" id="GO:0005829">
    <property type="term" value="C:cytosol"/>
    <property type="evidence" value="ECO:0007669"/>
    <property type="project" value="Ensembl"/>
</dbReference>
<dbReference type="GO" id="GO:0016604">
    <property type="term" value="C:nuclear body"/>
    <property type="evidence" value="ECO:0007669"/>
    <property type="project" value="Ensembl"/>
</dbReference>
<dbReference type="GO" id="GO:0005634">
    <property type="term" value="C:nucleus"/>
    <property type="evidence" value="ECO:0000250"/>
    <property type="project" value="UniProtKB"/>
</dbReference>
<dbReference type="GO" id="GO:0042802">
    <property type="term" value="F:identical protein binding"/>
    <property type="evidence" value="ECO:0007669"/>
    <property type="project" value="Ensembl"/>
</dbReference>
<dbReference type="GO" id="GO:0051301">
    <property type="term" value="P:cell division"/>
    <property type="evidence" value="ECO:0007669"/>
    <property type="project" value="UniProtKB-KW"/>
</dbReference>
<dbReference type="GO" id="GO:0140861">
    <property type="term" value="P:DNA repair-dependent chromatin remodeling"/>
    <property type="evidence" value="ECO:0000250"/>
    <property type="project" value="UniProtKB"/>
</dbReference>
<dbReference type="GO" id="GO:0006302">
    <property type="term" value="P:double-strand break repair"/>
    <property type="evidence" value="ECO:0000250"/>
    <property type="project" value="UniProtKB"/>
</dbReference>
<dbReference type="GO" id="GO:0071425">
    <property type="term" value="P:hematopoietic stem cell proliferation"/>
    <property type="evidence" value="ECO:0000315"/>
    <property type="project" value="MGI"/>
</dbReference>
<dbReference type="GO" id="GO:0007095">
    <property type="term" value="P:mitotic G2 DNA damage checkpoint signaling"/>
    <property type="evidence" value="ECO:0000250"/>
    <property type="project" value="UniProtKB"/>
</dbReference>
<dbReference type="GO" id="GO:0044818">
    <property type="term" value="P:mitotic G2/M transition checkpoint"/>
    <property type="evidence" value="ECO:0000303"/>
    <property type="project" value="ComplexPortal"/>
</dbReference>
<dbReference type="GO" id="GO:0045739">
    <property type="term" value="P:positive regulation of DNA repair"/>
    <property type="evidence" value="ECO:0000250"/>
    <property type="project" value="UniProtKB"/>
</dbReference>
<dbReference type="GO" id="GO:0006282">
    <property type="term" value="P:regulation of DNA repair"/>
    <property type="evidence" value="ECO:0000303"/>
    <property type="project" value="ComplexPortal"/>
</dbReference>
<dbReference type="GO" id="GO:0010212">
    <property type="term" value="P:response to ionizing radiation"/>
    <property type="evidence" value="ECO:0000250"/>
    <property type="project" value="UniProtKB"/>
</dbReference>
<dbReference type="CDD" id="cd21502">
    <property type="entry name" value="vWA_BABAM1"/>
    <property type="match status" value="1"/>
</dbReference>
<dbReference type="Gene3D" id="3.40.50.410">
    <property type="entry name" value="von Willebrand factor, type A domain"/>
    <property type="match status" value="1"/>
</dbReference>
<dbReference type="InterPro" id="IPR026126">
    <property type="entry name" value="BABAM1"/>
</dbReference>
<dbReference type="InterPro" id="IPR036465">
    <property type="entry name" value="vWFA_dom_sf"/>
</dbReference>
<dbReference type="PANTHER" id="PTHR15660">
    <property type="entry name" value="BRISC AND BRCA1-A COMPLEX MEMBER 1"/>
    <property type="match status" value="1"/>
</dbReference>
<dbReference type="PANTHER" id="PTHR15660:SF1">
    <property type="entry name" value="BRISC AND BRCA1-A COMPLEX MEMBER 1"/>
    <property type="match status" value="1"/>
</dbReference>
<dbReference type="SUPFAM" id="SSF53300">
    <property type="entry name" value="vWA-like"/>
    <property type="match status" value="1"/>
</dbReference>
<protein>
    <recommendedName>
        <fullName>BRISC and BRCA1-A complex member 1</fullName>
    </recommendedName>
    <alternativeName>
        <fullName>Mediator of RAP80 interactions and targeting subunit of 40 kDa</fullName>
    </alternativeName>
    <alternativeName>
        <fullName>New component of the BRCA1-A complex</fullName>
    </alternativeName>
</protein>